<protein>
    <recommendedName>
        <fullName evidence="1">Phosphate acyltransferase</fullName>
        <ecNumber evidence="1">2.3.1.274</ecNumber>
    </recommendedName>
    <alternativeName>
        <fullName evidence="1">Acyl-ACP phosphotransacylase</fullName>
    </alternativeName>
    <alternativeName>
        <fullName evidence="1">Acyl-[acyl-carrier-protein]--phosphate acyltransferase</fullName>
    </alternativeName>
    <alternativeName>
        <fullName evidence="1">Phosphate-acyl-ACP acyltransferase</fullName>
    </alternativeName>
</protein>
<evidence type="ECO:0000255" key="1">
    <source>
        <dbReference type="HAMAP-Rule" id="MF_00019"/>
    </source>
</evidence>
<accession>Q47EH2</accession>
<sequence>MTTRIAIDCMGGDHGPSVTVPAAIQFLAEHPSANLVLVGQEGVLRPLLGNHANDSRIRLLHASEIVGMDESPALALRNKKDSSMRVAINQVKAGDADACVSAGNTGALMAISRFVLKMLPGIDRPAICAPLPTVNGHTHMLDLGANVDCGPHHLLQFGIMGAMLVAAMEHKDQPTVGILNIGEEEIKGNEVVKAAAELLRASDLNFIGNVEGDGIYKGEADVIVCDGFVGNVALKTSEGLAQMLASSLRSEFKRNWLTKLAALIAISVLNNFKKRFDHRRYNGAILLGLKGISVKSHGSADILAFGNAISRAYDAAENRVVERISSRIAAMIPAAVENV</sequence>
<feature type="chain" id="PRO_1000001753" description="Phosphate acyltransferase">
    <location>
        <begin position="1"/>
        <end position="339"/>
    </location>
</feature>
<keyword id="KW-0963">Cytoplasm</keyword>
<keyword id="KW-0444">Lipid biosynthesis</keyword>
<keyword id="KW-0443">Lipid metabolism</keyword>
<keyword id="KW-0594">Phospholipid biosynthesis</keyword>
<keyword id="KW-1208">Phospholipid metabolism</keyword>
<keyword id="KW-0808">Transferase</keyword>
<reference key="1">
    <citation type="journal article" date="2009" name="BMC Genomics">
        <title>Metabolic analysis of the soil microbe Dechloromonas aromatica str. RCB: indications of a surprisingly complex life-style and cryptic anaerobic pathways for aromatic degradation.</title>
        <authorList>
            <person name="Salinero K.K."/>
            <person name="Keller K."/>
            <person name="Feil W.S."/>
            <person name="Feil H."/>
            <person name="Trong S."/>
            <person name="Di Bartolo G."/>
            <person name="Lapidus A."/>
        </authorList>
    </citation>
    <scope>NUCLEOTIDE SEQUENCE [LARGE SCALE GENOMIC DNA]</scope>
    <source>
        <strain>RCB</strain>
    </source>
</reference>
<name>PLSX_DECAR</name>
<organism>
    <name type="scientific">Dechloromonas aromatica (strain RCB)</name>
    <dbReference type="NCBI Taxonomy" id="159087"/>
    <lineage>
        <taxon>Bacteria</taxon>
        <taxon>Pseudomonadati</taxon>
        <taxon>Pseudomonadota</taxon>
        <taxon>Betaproteobacteria</taxon>
        <taxon>Rhodocyclales</taxon>
        <taxon>Azonexaceae</taxon>
        <taxon>Dechloromonas</taxon>
    </lineage>
</organism>
<proteinExistence type="inferred from homology"/>
<dbReference type="EC" id="2.3.1.274" evidence="1"/>
<dbReference type="EMBL" id="CP000089">
    <property type="protein sequence ID" value="AAZ46759.1"/>
    <property type="molecule type" value="Genomic_DNA"/>
</dbReference>
<dbReference type="SMR" id="Q47EH2"/>
<dbReference type="STRING" id="159087.Daro_2014"/>
<dbReference type="KEGG" id="dar:Daro_2014"/>
<dbReference type="eggNOG" id="COG0416">
    <property type="taxonomic scope" value="Bacteria"/>
</dbReference>
<dbReference type="HOGENOM" id="CLU_039379_1_0_4"/>
<dbReference type="OrthoDB" id="9806408at2"/>
<dbReference type="UniPathway" id="UPA00085"/>
<dbReference type="GO" id="GO:0005737">
    <property type="term" value="C:cytoplasm"/>
    <property type="evidence" value="ECO:0007669"/>
    <property type="project" value="UniProtKB-SubCell"/>
</dbReference>
<dbReference type="GO" id="GO:0043811">
    <property type="term" value="F:phosphate:acyl-[acyl carrier protein] acyltransferase activity"/>
    <property type="evidence" value="ECO:0007669"/>
    <property type="project" value="UniProtKB-UniRule"/>
</dbReference>
<dbReference type="GO" id="GO:0006633">
    <property type="term" value="P:fatty acid biosynthetic process"/>
    <property type="evidence" value="ECO:0007669"/>
    <property type="project" value="UniProtKB-UniRule"/>
</dbReference>
<dbReference type="GO" id="GO:0008654">
    <property type="term" value="P:phospholipid biosynthetic process"/>
    <property type="evidence" value="ECO:0007669"/>
    <property type="project" value="UniProtKB-KW"/>
</dbReference>
<dbReference type="Gene3D" id="3.40.718.10">
    <property type="entry name" value="Isopropylmalate Dehydrogenase"/>
    <property type="match status" value="1"/>
</dbReference>
<dbReference type="HAMAP" id="MF_00019">
    <property type="entry name" value="PlsX"/>
    <property type="match status" value="1"/>
</dbReference>
<dbReference type="InterPro" id="IPR003664">
    <property type="entry name" value="FA_synthesis"/>
</dbReference>
<dbReference type="InterPro" id="IPR012281">
    <property type="entry name" value="Phospholipid_synth_PlsX-like"/>
</dbReference>
<dbReference type="NCBIfam" id="TIGR00182">
    <property type="entry name" value="plsX"/>
    <property type="match status" value="1"/>
</dbReference>
<dbReference type="PANTHER" id="PTHR30100">
    <property type="entry name" value="FATTY ACID/PHOSPHOLIPID SYNTHESIS PROTEIN PLSX"/>
    <property type="match status" value="1"/>
</dbReference>
<dbReference type="PANTHER" id="PTHR30100:SF1">
    <property type="entry name" value="PHOSPHATE ACYLTRANSFERASE"/>
    <property type="match status" value="1"/>
</dbReference>
<dbReference type="Pfam" id="PF02504">
    <property type="entry name" value="FA_synthesis"/>
    <property type="match status" value="1"/>
</dbReference>
<dbReference type="PIRSF" id="PIRSF002465">
    <property type="entry name" value="Phsphlp_syn_PlsX"/>
    <property type="match status" value="1"/>
</dbReference>
<dbReference type="SUPFAM" id="SSF53659">
    <property type="entry name" value="Isocitrate/Isopropylmalate dehydrogenase-like"/>
    <property type="match status" value="1"/>
</dbReference>
<comment type="function">
    <text evidence="1">Catalyzes the reversible formation of acyl-phosphate (acyl-PO(4)) from acyl-[acyl-carrier-protein] (acyl-ACP). This enzyme utilizes acyl-ACP as fatty acyl donor, but not acyl-CoA.</text>
</comment>
<comment type="catalytic activity">
    <reaction evidence="1">
        <text>a fatty acyl-[ACP] + phosphate = an acyl phosphate + holo-[ACP]</text>
        <dbReference type="Rhea" id="RHEA:42292"/>
        <dbReference type="Rhea" id="RHEA-COMP:9685"/>
        <dbReference type="Rhea" id="RHEA-COMP:14125"/>
        <dbReference type="ChEBI" id="CHEBI:43474"/>
        <dbReference type="ChEBI" id="CHEBI:59918"/>
        <dbReference type="ChEBI" id="CHEBI:64479"/>
        <dbReference type="ChEBI" id="CHEBI:138651"/>
        <dbReference type="EC" id="2.3.1.274"/>
    </reaction>
</comment>
<comment type="pathway">
    <text evidence="1">Lipid metabolism; phospholipid metabolism.</text>
</comment>
<comment type="subunit">
    <text evidence="1">Homodimer. Probably interacts with PlsY.</text>
</comment>
<comment type="subcellular location">
    <subcellularLocation>
        <location evidence="1">Cytoplasm</location>
    </subcellularLocation>
    <text evidence="1">Associated with the membrane possibly through PlsY.</text>
</comment>
<comment type="similarity">
    <text evidence="1">Belongs to the PlsX family.</text>
</comment>
<gene>
    <name evidence="1" type="primary">plsX</name>
    <name type="ordered locus">Daro_2014</name>
</gene>